<dbReference type="EMBL" id="S93166">
    <property type="protein sequence ID" value="AAB21989.1"/>
    <property type="molecule type" value="mRNA"/>
</dbReference>
<dbReference type="PIR" id="S21111">
    <property type="entry name" value="S21111"/>
</dbReference>
<dbReference type="RefSeq" id="XP_070023737.1">
    <property type="nucleotide sequence ID" value="XM_070167636.1"/>
</dbReference>
<dbReference type="SMR" id="P36688"/>
<dbReference type="STRING" id="4096.P36688"/>
<dbReference type="GeneID" id="104223775"/>
<dbReference type="eggNOG" id="KOG1715">
    <property type="taxonomic scope" value="Eukaryota"/>
</dbReference>
<dbReference type="Proteomes" id="UP000189701">
    <property type="component" value="Unplaced"/>
</dbReference>
<dbReference type="GO" id="GO:0009507">
    <property type="term" value="C:chloroplast"/>
    <property type="evidence" value="ECO:0007669"/>
    <property type="project" value="UniProtKB-SubCell"/>
</dbReference>
<dbReference type="GO" id="GO:1990904">
    <property type="term" value="C:ribonucleoprotein complex"/>
    <property type="evidence" value="ECO:0007669"/>
    <property type="project" value="UniProtKB-KW"/>
</dbReference>
<dbReference type="GO" id="GO:0005840">
    <property type="term" value="C:ribosome"/>
    <property type="evidence" value="ECO:0007669"/>
    <property type="project" value="UniProtKB-KW"/>
</dbReference>
<dbReference type="GO" id="GO:0003729">
    <property type="term" value="F:mRNA binding"/>
    <property type="evidence" value="ECO:0007669"/>
    <property type="project" value="TreeGrafter"/>
</dbReference>
<dbReference type="GO" id="GO:0003735">
    <property type="term" value="F:structural constituent of ribosome"/>
    <property type="evidence" value="ECO:0007669"/>
    <property type="project" value="InterPro"/>
</dbReference>
<dbReference type="GO" id="GO:0006412">
    <property type="term" value="P:translation"/>
    <property type="evidence" value="ECO:0007669"/>
    <property type="project" value="InterPro"/>
</dbReference>
<dbReference type="CDD" id="cd00387">
    <property type="entry name" value="Ribosomal_L7_L12"/>
    <property type="match status" value="1"/>
</dbReference>
<dbReference type="FunFam" id="3.30.1390.10:FF:000001">
    <property type="entry name" value="50S ribosomal protein L7/L12"/>
    <property type="match status" value="1"/>
</dbReference>
<dbReference type="Gene3D" id="3.30.1390.10">
    <property type="match status" value="1"/>
</dbReference>
<dbReference type="Gene3D" id="1.20.5.710">
    <property type="entry name" value="Single helix bin"/>
    <property type="match status" value="1"/>
</dbReference>
<dbReference type="HAMAP" id="MF_00368">
    <property type="entry name" value="Ribosomal_bL12"/>
    <property type="match status" value="1"/>
</dbReference>
<dbReference type="InterPro" id="IPR000206">
    <property type="entry name" value="Ribosomal_bL12"/>
</dbReference>
<dbReference type="InterPro" id="IPR013823">
    <property type="entry name" value="Ribosomal_bL12_C"/>
</dbReference>
<dbReference type="InterPro" id="IPR014719">
    <property type="entry name" value="Ribosomal_bL12_C/ClpS-like"/>
</dbReference>
<dbReference type="InterPro" id="IPR008932">
    <property type="entry name" value="Ribosomal_bL12_oligo"/>
</dbReference>
<dbReference type="InterPro" id="IPR036235">
    <property type="entry name" value="Ribosomal_bL12_oligo_N_sf"/>
</dbReference>
<dbReference type="NCBIfam" id="TIGR00855">
    <property type="entry name" value="L12"/>
    <property type="match status" value="1"/>
</dbReference>
<dbReference type="PANTHER" id="PTHR45987">
    <property type="entry name" value="39S RIBOSOMAL PROTEIN L12"/>
    <property type="match status" value="1"/>
</dbReference>
<dbReference type="PANTHER" id="PTHR45987:SF26">
    <property type="entry name" value="LARGE RIBOSOMAL SUBUNIT PROTEIN BL12CX-RELATED"/>
    <property type="match status" value="1"/>
</dbReference>
<dbReference type="Pfam" id="PF00542">
    <property type="entry name" value="Ribosomal_L12"/>
    <property type="match status" value="1"/>
</dbReference>
<dbReference type="Pfam" id="PF16320">
    <property type="entry name" value="Ribosomal_L12_N"/>
    <property type="match status" value="1"/>
</dbReference>
<dbReference type="SUPFAM" id="SSF54736">
    <property type="entry name" value="ClpS-like"/>
    <property type="match status" value="1"/>
</dbReference>
<dbReference type="SUPFAM" id="SSF48300">
    <property type="entry name" value="Ribosomal protein L7/12, oligomerisation (N-terminal) domain"/>
    <property type="match status" value="1"/>
</dbReference>
<name>RK12_NICSY</name>
<proteinExistence type="evidence at transcript level"/>
<keyword id="KW-0150">Chloroplast</keyword>
<keyword id="KW-0934">Plastid</keyword>
<keyword id="KW-1185">Reference proteome</keyword>
<keyword id="KW-0687">Ribonucleoprotein</keyword>
<keyword id="KW-0689">Ribosomal protein</keyword>
<keyword id="KW-0809">Transit peptide</keyword>
<reference key="1">
    <citation type="journal article" date="1992" name="FEBS Lett.">
        <title>cDNA cloning and sequencing of tobacco chloroplast ribosomal protein L12.</title>
        <authorList>
            <person name="Li Y."/>
            <person name="Itadani H."/>
            <person name="Sugita M."/>
            <person name="Sugiura M."/>
        </authorList>
    </citation>
    <scope>NUCLEOTIDE SEQUENCE [MRNA]</scope>
    <source>
        <tissue>Leaf</tissue>
    </source>
</reference>
<organism>
    <name type="scientific">Nicotiana sylvestris</name>
    <name type="common">Wood tobacco</name>
    <name type="synonym">South American tobacco</name>
    <dbReference type="NCBI Taxonomy" id="4096"/>
    <lineage>
        <taxon>Eukaryota</taxon>
        <taxon>Viridiplantae</taxon>
        <taxon>Streptophyta</taxon>
        <taxon>Embryophyta</taxon>
        <taxon>Tracheophyta</taxon>
        <taxon>Spermatophyta</taxon>
        <taxon>Magnoliopsida</taxon>
        <taxon>eudicotyledons</taxon>
        <taxon>Gunneridae</taxon>
        <taxon>Pentapetalae</taxon>
        <taxon>asterids</taxon>
        <taxon>lamiids</taxon>
        <taxon>Solanales</taxon>
        <taxon>Solanaceae</taxon>
        <taxon>Nicotianoideae</taxon>
        <taxon>Nicotianeae</taxon>
        <taxon>Nicotiana</taxon>
    </lineage>
</organism>
<feature type="transit peptide" description="Chloroplast" evidence="1">
    <location>
        <begin position="1"/>
        <end position="53"/>
    </location>
</feature>
<feature type="chain" id="PRO_0000030455" description="Large ribosomal subunit protein bL12c">
    <location>
        <begin position="54"/>
        <end position="186"/>
    </location>
</feature>
<feature type="region of interest" description="Disordered" evidence="2">
    <location>
        <begin position="1"/>
        <end position="24"/>
    </location>
</feature>
<feature type="compositionally biased region" description="Polar residues" evidence="2">
    <location>
        <begin position="1"/>
        <end position="11"/>
    </location>
</feature>
<feature type="compositionally biased region" description="Low complexity" evidence="2">
    <location>
        <begin position="12"/>
        <end position="24"/>
    </location>
</feature>
<protein>
    <recommendedName>
        <fullName evidence="3">Large ribosomal subunit protein bL12c</fullName>
    </recommendedName>
    <alternativeName>
        <fullName>50S ribosomal protein L12, chloroplastic</fullName>
    </alternativeName>
    <alternativeName>
        <fullName>CL12</fullName>
    </alternativeName>
</protein>
<sequence length="186" mass="19687">MASTLSTITLRSPSPSTATSTHASIPFPKKTLEFPIRTPKLQNRRATFLRPLAAVEAPEKVVQLGDEISNLTLADAQKLVEYLQDKLGVTAASFAPAAVVAAPGAAAEAPAVVEEKTEFDVVIDEVPSNARIATIKAVRALTSLALKEAKELIEGLPKKFKEGVSKDEAEDAKKQLEEAGAKVSIA</sequence>
<comment type="subcellular location">
    <subcellularLocation>
        <location>Plastid</location>
        <location>Chloroplast</location>
    </subcellularLocation>
</comment>
<comment type="similarity">
    <text evidence="3">Belongs to the bacterial ribosomal protein bL12 family.</text>
</comment>
<accession>P36688</accession>
<evidence type="ECO:0000250" key="1"/>
<evidence type="ECO:0000256" key="2">
    <source>
        <dbReference type="SAM" id="MobiDB-lite"/>
    </source>
</evidence>
<evidence type="ECO:0000305" key="3"/>